<reference evidence="4" key="1">
    <citation type="journal article" date="2015" name="J. Nat. Prod.">
        <title>Characterization and biological activities of ocellatin peptides from the skin secretion of the frog Leptodactylus pustulatus.</title>
        <authorList>
            <person name="Marani M.M."/>
            <person name="Dourado F.S."/>
            <person name="Quelemes P.V."/>
            <person name="de Araujo A.R."/>
            <person name="Perfeito M.L."/>
            <person name="Barbosa E.A."/>
            <person name="Veras L.M."/>
            <person name="Coelho A.L."/>
            <person name="Andrade E.B."/>
            <person name="Eaton P."/>
            <person name="Longo J.P."/>
            <person name="Azevedo R.B."/>
            <person name="Delerue-Matos C."/>
            <person name="Leite J.R."/>
        </authorList>
    </citation>
    <scope>NUCLEOTIDE SEQUENCE [MRNA]</scope>
    <scope>PROTEIN SEQUENCE OF 42-73</scope>
    <scope>FUNCTION</scope>
    <scope>SUBCELLULAR LOCATION</scope>
    <scope>MASS SPECTROMETRY</scope>
    <scope>IDENTIFICATION BY MASS SPECTROMETRY</scope>
    <source>
        <tissue evidence="3">Skin secretion</tissue>
    </source>
</reference>
<feature type="signal peptide" evidence="1">
    <location>
        <begin position="1"/>
        <end position="22"/>
    </location>
</feature>
<feature type="propeptide" id="PRO_0000436222" evidence="4">
    <location>
        <begin position="23"/>
        <end position="39"/>
    </location>
</feature>
<feature type="peptide" id="PRO_0000436223" description="Ocellatin-PT8" evidence="2">
    <location>
        <begin position="42"/>
        <end position="73"/>
    </location>
</feature>
<organism>
    <name type="scientific">Leptodactylus pustulatus</name>
    <name type="common">Ceara white-lipped frog</name>
    <dbReference type="NCBI Taxonomy" id="1349691"/>
    <lineage>
        <taxon>Eukaryota</taxon>
        <taxon>Metazoa</taxon>
        <taxon>Chordata</taxon>
        <taxon>Craniata</taxon>
        <taxon>Vertebrata</taxon>
        <taxon>Euteleostomi</taxon>
        <taxon>Amphibia</taxon>
        <taxon>Batrachia</taxon>
        <taxon>Anura</taxon>
        <taxon>Neobatrachia</taxon>
        <taxon>Hyloidea</taxon>
        <taxon>Leptodactylidae</taxon>
        <taxon>Leptodactylinae</taxon>
        <taxon>Leptodactylus</taxon>
    </lineage>
</organism>
<name>OCE8_LEPPU</name>
<keyword id="KW-0878">Amphibian defense peptide</keyword>
<keyword id="KW-0044">Antibiotic</keyword>
<keyword id="KW-0929">Antimicrobial</keyword>
<keyword id="KW-0165">Cleavage on pair of basic residues</keyword>
<keyword id="KW-0903">Direct protein sequencing</keyword>
<keyword id="KW-0964">Secreted</keyword>
<keyword id="KW-0732">Signal</keyword>
<proteinExistence type="evidence at protein level"/>
<dbReference type="GO" id="GO:0005576">
    <property type="term" value="C:extracellular region"/>
    <property type="evidence" value="ECO:0007669"/>
    <property type="project" value="UniProtKB-SubCell"/>
</dbReference>
<dbReference type="GO" id="GO:0042742">
    <property type="term" value="P:defense response to bacterium"/>
    <property type="evidence" value="ECO:0007669"/>
    <property type="project" value="UniProtKB-KW"/>
</dbReference>
<dbReference type="InterPro" id="IPR004275">
    <property type="entry name" value="Frog_antimicrobial_propeptide"/>
</dbReference>
<dbReference type="InterPro" id="IPR016322">
    <property type="entry name" value="FSAP"/>
</dbReference>
<dbReference type="Pfam" id="PF03032">
    <property type="entry name" value="FSAP_sig_propep"/>
    <property type="match status" value="1"/>
</dbReference>
<dbReference type="PIRSF" id="PIRSF001822">
    <property type="entry name" value="Dermaseptin_precursor"/>
    <property type="match status" value="1"/>
</dbReference>
<protein>
    <recommendedName>
        <fullName evidence="3">Ocellatin-PT8</fullName>
    </recommendedName>
</protein>
<evidence type="ECO:0000255" key="1"/>
<evidence type="ECO:0000269" key="2">
    <source>
    </source>
</evidence>
<evidence type="ECO:0000303" key="3">
    <source>
    </source>
</evidence>
<evidence type="ECO:0000305" key="4"/>
<evidence type="ECO:0000305" key="5">
    <source>
    </source>
</evidence>
<accession>C0HK03</accession>
<sequence>MAFLKKSLFLVLFLGLVSLSICDEEKRQDEDDDDDDDEEKRGVFDIIKGAGKQLIARAMGKIAEKVGLNKDGN</sequence>
<comment type="function">
    <text evidence="2">Has antibacterial activity against Gram-negative bacteria E.coli ATCC 25922 (MIC=60 uM), K.pneumoniae ATCC 700603 (MIC=240 uM) and S.choleraesuis ATCC 14028 (MIC=240 uM) and against Gram-positive bacterium S.aureus ATCC 29313 (MIC=240 uM). Shows no hemolytic activity and no cytotoxicity.</text>
</comment>
<comment type="subcellular location">
    <subcellularLocation>
        <location evidence="2">Secreted</location>
    </subcellularLocation>
</comment>
<comment type="tissue specificity">
    <text evidence="5">Expressed by the skin glands.</text>
</comment>
<comment type="mass spectrometry"/>
<comment type="similarity">
    <text evidence="4">Belongs to the frog skin active peptide (FSAP) family. Ocellatin subfamily.</text>
</comment>
<comment type="online information" name="The antimicrobial peptide database">
    <link uri="https://wangapd3.com/database/query_output.php?ID=02600"/>
</comment>